<reference key="1">
    <citation type="submission" date="2006-12" db="EMBL/GenBank/DDBJ databases">
        <title>Complete sequence of Chlorobium phaeobacteroides DSM 266.</title>
        <authorList>
            <consortium name="US DOE Joint Genome Institute"/>
            <person name="Copeland A."/>
            <person name="Lucas S."/>
            <person name="Lapidus A."/>
            <person name="Barry K."/>
            <person name="Detter J.C."/>
            <person name="Glavina del Rio T."/>
            <person name="Hammon N."/>
            <person name="Israni S."/>
            <person name="Pitluck S."/>
            <person name="Goltsman E."/>
            <person name="Schmutz J."/>
            <person name="Larimer F."/>
            <person name="Land M."/>
            <person name="Hauser L."/>
            <person name="Mikhailova N."/>
            <person name="Li T."/>
            <person name="Overmann J."/>
            <person name="Bryant D.A."/>
            <person name="Richardson P."/>
        </authorList>
    </citation>
    <scope>NUCLEOTIDE SEQUENCE [LARGE SCALE GENOMIC DNA]</scope>
    <source>
        <strain>DSM 266 / SMG 266 / 2430</strain>
    </source>
</reference>
<feature type="chain" id="PRO_1000022820" description="2-C-methyl-D-erythritol 2,4-cyclodiphosphate synthase">
    <location>
        <begin position="1"/>
        <end position="158"/>
    </location>
</feature>
<feature type="binding site" evidence="1">
    <location>
        <begin position="8"/>
        <end position="10"/>
    </location>
    <ligand>
        <name>4-CDP-2-C-methyl-D-erythritol 2-phosphate</name>
        <dbReference type="ChEBI" id="CHEBI:57919"/>
    </ligand>
</feature>
<feature type="binding site" evidence="1">
    <location>
        <position position="8"/>
    </location>
    <ligand>
        <name>a divalent metal cation</name>
        <dbReference type="ChEBI" id="CHEBI:60240"/>
    </ligand>
</feature>
<feature type="binding site" evidence="1">
    <location>
        <position position="10"/>
    </location>
    <ligand>
        <name>a divalent metal cation</name>
        <dbReference type="ChEBI" id="CHEBI:60240"/>
    </ligand>
</feature>
<feature type="binding site" evidence="1">
    <location>
        <begin position="34"/>
        <end position="35"/>
    </location>
    <ligand>
        <name>4-CDP-2-C-methyl-D-erythritol 2-phosphate</name>
        <dbReference type="ChEBI" id="CHEBI:57919"/>
    </ligand>
</feature>
<feature type="binding site" evidence="1">
    <location>
        <position position="42"/>
    </location>
    <ligand>
        <name>a divalent metal cation</name>
        <dbReference type="ChEBI" id="CHEBI:60240"/>
    </ligand>
</feature>
<feature type="binding site" evidence="1">
    <location>
        <begin position="56"/>
        <end position="58"/>
    </location>
    <ligand>
        <name>4-CDP-2-C-methyl-D-erythritol 2-phosphate</name>
        <dbReference type="ChEBI" id="CHEBI:57919"/>
    </ligand>
</feature>
<feature type="binding site" evidence="1">
    <location>
        <begin position="132"/>
        <end position="135"/>
    </location>
    <ligand>
        <name>4-CDP-2-C-methyl-D-erythritol 2-phosphate</name>
        <dbReference type="ChEBI" id="CHEBI:57919"/>
    </ligand>
</feature>
<feature type="binding site" evidence="1">
    <location>
        <position position="142"/>
    </location>
    <ligand>
        <name>4-CDP-2-C-methyl-D-erythritol 2-phosphate</name>
        <dbReference type="ChEBI" id="CHEBI:57919"/>
    </ligand>
</feature>
<feature type="site" description="Transition state stabilizer" evidence="1">
    <location>
        <position position="34"/>
    </location>
</feature>
<feature type="site" description="Transition state stabilizer" evidence="1">
    <location>
        <position position="133"/>
    </location>
</feature>
<organism>
    <name type="scientific">Chlorobium phaeobacteroides (strain DSM 266 / SMG 266 / 2430)</name>
    <dbReference type="NCBI Taxonomy" id="290317"/>
    <lineage>
        <taxon>Bacteria</taxon>
        <taxon>Pseudomonadati</taxon>
        <taxon>Chlorobiota</taxon>
        <taxon>Chlorobiia</taxon>
        <taxon>Chlorobiales</taxon>
        <taxon>Chlorobiaceae</taxon>
        <taxon>Chlorobium/Pelodictyon group</taxon>
        <taxon>Chlorobium</taxon>
    </lineage>
</organism>
<proteinExistence type="inferred from homology"/>
<evidence type="ECO:0000255" key="1">
    <source>
        <dbReference type="HAMAP-Rule" id="MF_00107"/>
    </source>
</evidence>
<comment type="function">
    <text evidence="1">Involved in the biosynthesis of isopentenyl diphosphate (IPP) and dimethylallyl diphosphate (DMAPP), two major building blocks of isoprenoid compounds. Catalyzes the conversion of 4-diphosphocytidyl-2-C-methyl-D-erythritol 2-phosphate (CDP-ME2P) to 2-C-methyl-D-erythritol 2,4-cyclodiphosphate (ME-CPP) with a corresponding release of cytidine 5-monophosphate (CMP).</text>
</comment>
<comment type="catalytic activity">
    <reaction evidence="1">
        <text>4-CDP-2-C-methyl-D-erythritol 2-phosphate = 2-C-methyl-D-erythritol 2,4-cyclic diphosphate + CMP</text>
        <dbReference type="Rhea" id="RHEA:23864"/>
        <dbReference type="ChEBI" id="CHEBI:57919"/>
        <dbReference type="ChEBI" id="CHEBI:58483"/>
        <dbReference type="ChEBI" id="CHEBI:60377"/>
        <dbReference type="EC" id="4.6.1.12"/>
    </reaction>
</comment>
<comment type="cofactor">
    <cofactor evidence="1">
        <name>a divalent metal cation</name>
        <dbReference type="ChEBI" id="CHEBI:60240"/>
    </cofactor>
    <text evidence="1">Binds 1 divalent metal cation per subunit.</text>
</comment>
<comment type="pathway">
    <text evidence="1">Isoprenoid biosynthesis; isopentenyl diphosphate biosynthesis via DXP pathway; isopentenyl diphosphate from 1-deoxy-D-xylulose 5-phosphate: step 4/6.</text>
</comment>
<comment type="subunit">
    <text evidence="1">Homotrimer.</text>
</comment>
<comment type="similarity">
    <text evidence="1">Belongs to the IspF family.</text>
</comment>
<gene>
    <name evidence="1" type="primary">ispF</name>
    <name type="ordered locus">Cpha266_0591</name>
</gene>
<keyword id="KW-0414">Isoprene biosynthesis</keyword>
<keyword id="KW-0456">Lyase</keyword>
<keyword id="KW-0479">Metal-binding</keyword>
<keyword id="KW-1185">Reference proteome</keyword>
<name>ISPF_CHLPD</name>
<dbReference type="EC" id="4.6.1.12" evidence="1"/>
<dbReference type="EMBL" id="CP000492">
    <property type="protein sequence ID" value="ABL64647.1"/>
    <property type="molecule type" value="Genomic_DNA"/>
</dbReference>
<dbReference type="RefSeq" id="WP_011744480.1">
    <property type="nucleotide sequence ID" value="NC_008639.1"/>
</dbReference>
<dbReference type="SMR" id="A1BE20"/>
<dbReference type="STRING" id="290317.Cpha266_0591"/>
<dbReference type="KEGG" id="cph:Cpha266_0591"/>
<dbReference type="eggNOG" id="COG0245">
    <property type="taxonomic scope" value="Bacteria"/>
</dbReference>
<dbReference type="HOGENOM" id="CLU_084630_2_0_10"/>
<dbReference type="OrthoDB" id="9804336at2"/>
<dbReference type="UniPathway" id="UPA00056">
    <property type="reaction ID" value="UER00095"/>
</dbReference>
<dbReference type="Proteomes" id="UP000008701">
    <property type="component" value="Chromosome"/>
</dbReference>
<dbReference type="GO" id="GO:0008685">
    <property type="term" value="F:2-C-methyl-D-erythritol 2,4-cyclodiphosphate synthase activity"/>
    <property type="evidence" value="ECO:0007669"/>
    <property type="project" value="UniProtKB-UniRule"/>
</dbReference>
<dbReference type="GO" id="GO:0046872">
    <property type="term" value="F:metal ion binding"/>
    <property type="evidence" value="ECO:0007669"/>
    <property type="project" value="UniProtKB-KW"/>
</dbReference>
<dbReference type="GO" id="GO:0019288">
    <property type="term" value="P:isopentenyl diphosphate biosynthetic process, methylerythritol 4-phosphate pathway"/>
    <property type="evidence" value="ECO:0007669"/>
    <property type="project" value="UniProtKB-UniRule"/>
</dbReference>
<dbReference type="GO" id="GO:0016114">
    <property type="term" value="P:terpenoid biosynthetic process"/>
    <property type="evidence" value="ECO:0007669"/>
    <property type="project" value="InterPro"/>
</dbReference>
<dbReference type="CDD" id="cd00554">
    <property type="entry name" value="MECDP_synthase"/>
    <property type="match status" value="1"/>
</dbReference>
<dbReference type="FunFam" id="3.30.1330.50:FF:000001">
    <property type="entry name" value="2-C-methyl-D-erythritol 2,4-cyclodiphosphate synthase"/>
    <property type="match status" value="1"/>
</dbReference>
<dbReference type="Gene3D" id="3.30.1330.50">
    <property type="entry name" value="2-C-methyl-D-erythritol 2,4-cyclodiphosphate synthase"/>
    <property type="match status" value="1"/>
</dbReference>
<dbReference type="HAMAP" id="MF_00107">
    <property type="entry name" value="IspF"/>
    <property type="match status" value="1"/>
</dbReference>
<dbReference type="InterPro" id="IPR003526">
    <property type="entry name" value="MECDP_synthase"/>
</dbReference>
<dbReference type="InterPro" id="IPR020555">
    <property type="entry name" value="MECDP_synthase_CS"/>
</dbReference>
<dbReference type="InterPro" id="IPR036571">
    <property type="entry name" value="MECDP_synthase_sf"/>
</dbReference>
<dbReference type="NCBIfam" id="TIGR00151">
    <property type="entry name" value="ispF"/>
    <property type="match status" value="1"/>
</dbReference>
<dbReference type="PANTHER" id="PTHR43181">
    <property type="entry name" value="2-C-METHYL-D-ERYTHRITOL 2,4-CYCLODIPHOSPHATE SYNTHASE, CHLOROPLASTIC"/>
    <property type="match status" value="1"/>
</dbReference>
<dbReference type="PANTHER" id="PTHR43181:SF1">
    <property type="entry name" value="2-C-METHYL-D-ERYTHRITOL 2,4-CYCLODIPHOSPHATE SYNTHASE, CHLOROPLASTIC"/>
    <property type="match status" value="1"/>
</dbReference>
<dbReference type="Pfam" id="PF02542">
    <property type="entry name" value="YgbB"/>
    <property type="match status" value="1"/>
</dbReference>
<dbReference type="SUPFAM" id="SSF69765">
    <property type="entry name" value="IpsF-like"/>
    <property type="match status" value="1"/>
</dbReference>
<dbReference type="PROSITE" id="PS01350">
    <property type="entry name" value="ISPF"/>
    <property type="match status" value="1"/>
</dbReference>
<accession>A1BE20</accession>
<sequence>MRTGIGIDVHPFAEGRKLVIGGVEIPSAKGLDGHSDADVLLHAVSDALLGAAALGDIGLHFPNTSQEFKDIDSMILLKHVKKLLDKEGFRIVNIDAMLLLEAPKIASYINEMRKNIARCLGLELNAVSVKATTNEKLGYIGREEGAAAHAVCLIQVKP</sequence>
<protein>
    <recommendedName>
        <fullName evidence="1">2-C-methyl-D-erythritol 2,4-cyclodiphosphate synthase</fullName>
        <shortName evidence="1">MECDP-synthase</shortName>
        <shortName evidence="1">MECPP-synthase</shortName>
        <shortName evidence="1">MECPS</shortName>
        <ecNumber evidence="1">4.6.1.12</ecNumber>
    </recommendedName>
</protein>